<reference key="1">
    <citation type="journal article" date="1991" name="Cell Regul.">
        <title>Identification of chicken embryo kinase 5, a developmentally regulated receptor-type tyrosine kinase of the Eph family.</title>
        <authorList>
            <person name="Pasquale E.B."/>
        </authorList>
    </citation>
    <scope>NUCLEOTIDE SEQUENCE [MRNA] (ISOFORM SHORT)</scope>
    <source>
        <tissue>Embryo</tissue>
    </source>
</reference>
<reference key="2">
    <citation type="journal article" date="1993" name="Oncogene">
        <title>Five novel avian Eph-related tyrosine kinases are differentially expressed.</title>
        <authorList>
            <person name="Sajjadi F.G."/>
            <person name="Pasquale E.B."/>
        </authorList>
    </citation>
    <scope>NUCLEOTIDE SEQUENCE [MRNA] (ISOFORMS LONG AND SHORT)</scope>
    <source>
        <tissue>Brain</tissue>
    </source>
</reference>
<protein>
    <recommendedName>
        <fullName>Ephrin type-B receptor 2</fullName>
        <ecNumber>2.7.10.1</ecNumber>
    </recommendedName>
    <alternativeName>
        <fullName>EPH-like kinase 5</fullName>
        <shortName>EK5</shortName>
        <shortName>cEK5</shortName>
    </alternativeName>
    <component>
        <recommendedName>
            <fullName evidence="2">EphB2/CTF1</fullName>
        </recommendedName>
    </component>
    <component>
        <recommendedName>
            <fullName evidence="2">EphB2/CTF2</fullName>
        </recommendedName>
    </component>
</protein>
<feature type="signal peptide" evidence="3">
    <location>
        <begin position="1"/>
        <end position="19"/>
    </location>
</feature>
<feature type="chain" id="PRO_0000016829" description="Ephrin type-B receptor 2">
    <location>
        <begin position="20"/>
        <end position="1004"/>
    </location>
</feature>
<feature type="chain" id="PRO_0000445965" description="EphB2/CTF1" evidence="2">
    <location>
        <begin position="537"/>
        <end position="1004"/>
    </location>
</feature>
<feature type="chain" id="PRO_0000445966" description="EphB2/CTF2" evidence="2">
    <location>
        <begin position="563"/>
        <end position="1004"/>
    </location>
</feature>
<feature type="topological domain" description="Extracellular" evidence="3">
    <location>
        <begin position="20"/>
        <end position="544"/>
    </location>
</feature>
<feature type="transmembrane region" description="Helical" evidence="3">
    <location>
        <begin position="545"/>
        <end position="565"/>
    </location>
</feature>
<feature type="topological domain" description="Cytoplasmic" evidence="3">
    <location>
        <begin position="566"/>
        <end position="1004"/>
    </location>
</feature>
<feature type="domain" description="Eph LBD" evidence="7">
    <location>
        <begin position="21"/>
        <end position="203"/>
    </location>
</feature>
<feature type="domain" description="Fibronectin type-III 1" evidence="6">
    <location>
        <begin position="325"/>
        <end position="435"/>
    </location>
</feature>
<feature type="domain" description="Fibronectin type-III 2" evidence="6">
    <location>
        <begin position="436"/>
        <end position="531"/>
    </location>
</feature>
<feature type="domain" description="Protein kinase" evidence="4">
    <location>
        <begin position="639"/>
        <end position="902"/>
    </location>
</feature>
<feature type="domain" description="SAM" evidence="5">
    <location>
        <begin position="931"/>
        <end position="995"/>
    </location>
</feature>
<feature type="short sequence motif" description="PDZ-binding" evidence="3">
    <location>
        <begin position="1002"/>
        <end position="1004"/>
    </location>
</feature>
<feature type="active site" description="Proton acceptor" evidence="4 8">
    <location>
        <position position="764"/>
    </location>
</feature>
<feature type="binding site" evidence="4">
    <location>
        <begin position="645"/>
        <end position="653"/>
    </location>
    <ligand>
        <name>ATP</name>
        <dbReference type="ChEBI" id="CHEBI:30616"/>
    </ligand>
</feature>
<feature type="binding site" evidence="4">
    <location>
        <position position="671"/>
    </location>
    <ligand>
        <name>ATP</name>
        <dbReference type="ChEBI" id="CHEBI:30616"/>
    </ligand>
</feature>
<feature type="site" description="Cleavage; by a metalloproteinase" evidence="2">
    <location>
        <begin position="536"/>
        <end position="537"/>
    </location>
</feature>
<feature type="site" description="Cleavage; by gamma-secretase/PS1" evidence="2">
    <location>
        <begin position="562"/>
        <end position="563"/>
    </location>
</feature>
<feature type="glycosylation site" description="N-linked (GlcNAc...) asparagine" evidence="3">
    <location>
        <position position="266"/>
    </location>
</feature>
<feature type="glycosylation site" description="N-linked (GlcNAc...) asparagine" evidence="3">
    <location>
        <position position="337"/>
    </location>
</feature>
<feature type="glycosylation site" description="N-linked (GlcNAc...) asparagine" evidence="3">
    <location>
        <position position="429"/>
    </location>
</feature>
<feature type="glycosylation site" description="N-linked (GlcNAc...) asparagine" evidence="3">
    <location>
        <position position="478"/>
    </location>
</feature>
<feature type="glycosylation site" description="N-linked (GlcNAc...) asparagine" evidence="3">
    <location>
        <position position="483"/>
    </location>
</feature>
<feature type="disulfide bond" evidence="1">
    <location>
        <begin position="63"/>
        <end position="185"/>
    </location>
</feature>
<feature type="disulfide bond" evidence="1">
    <location>
        <begin position="98"/>
        <end position="108"/>
    </location>
</feature>
<feature type="splice variant" id="VSP_003018" description="In isoform Short." evidence="9 10">
    <location>
        <begin position="591"/>
        <end position="606"/>
    </location>
</feature>
<feature type="helix" evidence="12">
    <location>
        <begin position="936"/>
        <end position="942"/>
    </location>
</feature>
<feature type="helix" evidence="12">
    <location>
        <begin position="946"/>
        <end position="948"/>
    </location>
</feature>
<feature type="helix" evidence="12">
    <location>
        <begin position="949"/>
        <end position="955"/>
    </location>
</feature>
<feature type="helix" evidence="12">
    <location>
        <begin position="962"/>
        <end position="965"/>
    </location>
</feature>
<feature type="helix" evidence="12">
    <location>
        <begin position="968"/>
        <end position="974"/>
    </location>
</feature>
<feature type="helix" evidence="12">
    <location>
        <begin position="981"/>
        <end position="995"/>
    </location>
</feature>
<proteinExistence type="evidence at protein level"/>
<name>EPHB2_CHICK</name>
<keyword id="KW-0002">3D-structure</keyword>
<keyword id="KW-0025">Alternative splicing</keyword>
<keyword id="KW-0067">ATP-binding</keyword>
<keyword id="KW-1003">Cell membrane</keyword>
<keyword id="KW-0966">Cell projection</keyword>
<keyword id="KW-0217">Developmental protein</keyword>
<keyword id="KW-1015">Disulfide bond</keyword>
<keyword id="KW-0325">Glycoprotein</keyword>
<keyword id="KW-0418">Kinase</keyword>
<keyword id="KW-0472">Membrane</keyword>
<keyword id="KW-0524">Neurogenesis</keyword>
<keyword id="KW-0547">Nucleotide-binding</keyword>
<keyword id="KW-0675">Receptor</keyword>
<keyword id="KW-1185">Reference proteome</keyword>
<keyword id="KW-0677">Repeat</keyword>
<keyword id="KW-0732">Signal</keyword>
<keyword id="KW-0808">Transferase</keyword>
<keyword id="KW-0812">Transmembrane</keyword>
<keyword id="KW-1133">Transmembrane helix</keyword>
<keyword id="KW-0829">Tyrosine-protein kinase</keyword>
<accession>P28693</accession>
<gene>
    <name type="primary">EPHB2</name>
    <name type="synonym">CEK5</name>
</gene>
<comment type="function">
    <text evidence="1">Receptor tyrosine kinase which binds promiscuously transmembrane ephrin-B family ligands residing on adjacent cells, leading to contact-dependent bidirectional signaling into neighboring cells. The signaling pathway downstream of the receptor is referred to as forward signaling while the signaling pathway downstream of the ephrin ligand is referred to as reverse signaling. Functions in axon guidance during development. In addition to axon guidance, also regulates dendritic spines development and maturation and stimulates the formation of excitatory synapses (By similarity).</text>
</comment>
<comment type="catalytic activity">
    <reaction evidence="8">
        <text>L-tyrosyl-[protein] + ATP = O-phospho-L-tyrosyl-[protein] + ADP + H(+)</text>
        <dbReference type="Rhea" id="RHEA:10596"/>
        <dbReference type="Rhea" id="RHEA-COMP:10136"/>
        <dbReference type="Rhea" id="RHEA-COMP:20101"/>
        <dbReference type="ChEBI" id="CHEBI:15378"/>
        <dbReference type="ChEBI" id="CHEBI:30616"/>
        <dbReference type="ChEBI" id="CHEBI:46858"/>
        <dbReference type="ChEBI" id="CHEBI:61978"/>
        <dbReference type="ChEBI" id="CHEBI:456216"/>
        <dbReference type="EC" id="2.7.10.1"/>
    </reaction>
</comment>
<comment type="subunit">
    <text evidence="1">Heterotetramer upon binding of the ligand. The heterotetramer is composed of an ephrin dimer and a receptor dimer. Oligomerization is probably required to induce biological responses (By similarity).</text>
</comment>
<comment type="interaction">
    <interactant intactId="EBI-6725885">
        <id>P28693</id>
    </interactant>
    <interactant intactId="EBI-914519">
        <id>P00520</id>
        <label>Abl1</label>
    </interactant>
    <organismsDiffer>true</organismsDiffer>
    <experiments>5</experiments>
</comment>
<comment type="subcellular location">
    <subcellularLocation>
        <location evidence="1">Cell membrane</location>
        <topology evidence="1">Single-pass type I membrane protein</topology>
    </subcellularLocation>
    <subcellularLocation>
        <location evidence="1">Cell projection</location>
        <location evidence="1">Axon</location>
    </subcellularLocation>
    <subcellularLocation>
        <location evidence="1">Cell projection</location>
        <location evidence="1">Dendrite</location>
    </subcellularLocation>
</comment>
<comment type="alternative products">
    <event type="alternative splicing"/>
    <isoform>
        <id>P28693-1</id>
        <name>Long</name>
        <name>CEK5+</name>
        <sequence type="displayed"/>
    </isoform>
    <isoform>
        <id>P28693-2</id>
        <name>Short</name>
        <sequence type="described" ref="VSP_003018"/>
    </isoform>
</comment>
<comment type="tissue specificity">
    <text>Wide tissue distribution throughout development and sustained expression in adult brain. The longer form (CEK5+) is specifically expressed in the central nervous system.</text>
</comment>
<comment type="PTM">
    <text evidence="2">Ligand binding induces cleavage by matrix metalloproteinases (MMPs) such as MMP7/MMP9, producing an EphB2/N-terminal fragment (NTF) and a C-terminal long fragment (EphB2-LF). EphB2-LF is further cleaved by MMPs, producing EphB2/CTF1 which is further cleaved by the PS1/gamma-secretase producing EphB2/CTF2.</text>
</comment>
<comment type="similarity">
    <text evidence="4">Belongs to the protein kinase superfamily. Tyr protein kinase family. Ephrin receptor subfamily.</text>
</comment>
<comment type="sequence caution" evidence="11">
    <conflict type="erroneous initiation">
        <sequence resource="EMBL-CDS" id="AAA48667"/>
    </conflict>
</comment>
<organism>
    <name type="scientific">Gallus gallus</name>
    <name type="common">Chicken</name>
    <dbReference type="NCBI Taxonomy" id="9031"/>
    <lineage>
        <taxon>Eukaryota</taxon>
        <taxon>Metazoa</taxon>
        <taxon>Chordata</taxon>
        <taxon>Craniata</taxon>
        <taxon>Vertebrata</taxon>
        <taxon>Euteleostomi</taxon>
        <taxon>Archelosauria</taxon>
        <taxon>Archosauria</taxon>
        <taxon>Dinosauria</taxon>
        <taxon>Saurischia</taxon>
        <taxon>Theropoda</taxon>
        <taxon>Coelurosauria</taxon>
        <taxon>Aves</taxon>
        <taxon>Neognathae</taxon>
        <taxon>Galloanserae</taxon>
        <taxon>Galliformes</taxon>
        <taxon>Phasianidae</taxon>
        <taxon>Phasianinae</taxon>
        <taxon>Gallus</taxon>
    </lineage>
</organism>
<sequence>MGPLWFCCLPLALLPLLAAVEETLMDSTTATAELGWMVHPPSGWEEVSGYDENMNTIRTYQVCNVFESSQNNWLRTKYIRRRGAHRIHVEMKFSVRDCSSIPNVPGSCKETFNLYYYESDFDSATKTFPNWMENPWMKVDTIAADESFSQVDLGGRVMKINTEVRSFGPVSKNGFYLAFQDYGGCMSLIAVRVFYRKCPRVIQNGAVFQETLSGAESTSLVAARGTCISNAEEVDVPIKLYCNGDGEWLVPIGRCMCRPGYESVENGTVCRGCPSGTFKASQGDEGCVHCPINSRTTSEGATNCVCRNGYYRADADPVDMPCTTIPSAPQAVISSVNETSLMLEWTPPRDSGGREDLVYNIICKSCGSGRGACTRCGDNVQFAPRQLGLTEPRIYISDLLAHTQYTFEIQAVNGVTDQSPFSPQFASVNITTNQAAPSAVSIMHQVSRTVDSITLSWSQPDQPNGVILDYELQYYEKNLSELNSTAVKSPTNTVTVQNLKAGTIYVFQVRARTVAGYGRYSGKMYFQTMTEAEYQTSVQEKLPLIIGSSAAGLVFLIAVVVIIIVCNRRRGFERADSEYTDKLQHYTSGHSTYRGPPPGLGVRLFVMTPGMKIYIDPFTYEDPNEAVREFAKEIDISCVKIEQVIGAGEFGEVCSGHLKLPGKREIFVAIKTLKSGYTEKQRRDFLSEASIMGQFDHPNVIHLEGVVTKSSPVMIITEFMENGSLDSFLRQNDGQFTVIQLVGMLRGIAAGMKYLADMNYVHRDLAARNILVNSNLVCKVSDFGLSRFLEDDTSDPTYTSALGGKIPIRWTAPEAIQYRKFTSASDVWSYGIVMWEVMSYGERPYWDMTNQDVINAIEQDYRLPPPMDCPNALHQLMLDCWQKDRNHRPKFGQIVNTLDKMIRNPNSLKAMAPLSSGVNLPLLDRTIPDYTSFNTVDEWLDAIKMSQYKESFASAGFTTFDIVSQMTVEDILRVGVTLAGHQKKILNSIQVMRAQMNQIQSVEV</sequence>
<dbReference type="EC" id="2.7.10.1"/>
<dbReference type="EMBL" id="M62325">
    <property type="protein sequence ID" value="AAA48667.1"/>
    <property type="status" value="ALT_INIT"/>
    <property type="molecule type" value="mRNA"/>
</dbReference>
<dbReference type="PIR" id="A56599">
    <property type="entry name" value="A56599"/>
</dbReference>
<dbReference type="RefSeq" id="NP_996834.1">
    <property type="nucleotide sequence ID" value="NM_206951.3"/>
</dbReference>
<dbReference type="PDB" id="1SGG">
    <property type="method" value="NMR"/>
    <property type="chains" value="A=924-998"/>
</dbReference>
<dbReference type="PDBsum" id="1SGG"/>
<dbReference type="BMRB" id="P28693"/>
<dbReference type="SMR" id="P28693"/>
<dbReference type="BioGRID" id="676759">
    <property type="interactions" value="1"/>
</dbReference>
<dbReference type="FunCoup" id="P28693">
    <property type="interactions" value="471"/>
</dbReference>
<dbReference type="IntAct" id="P28693">
    <property type="interactions" value="3"/>
</dbReference>
<dbReference type="STRING" id="9031.ENSGALP00000007541"/>
<dbReference type="GlyCosmos" id="P28693">
    <property type="glycosylation" value="5 sites, No reported glycans"/>
</dbReference>
<dbReference type="GlyGen" id="P28693">
    <property type="glycosylation" value="5 sites"/>
</dbReference>
<dbReference type="iPTMnet" id="P28693"/>
<dbReference type="PaxDb" id="9031-ENSGALP00000007541"/>
<dbReference type="GeneID" id="396513"/>
<dbReference type="KEGG" id="gga:396513"/>
<dbReference type="CTD" id="2048"/>
<dbReference type="VEuPathDB" id="HostDB:geneid_396513"/>
<dbReference type="eggNOG" id="KOG0196">
    <property type="taxonomic scope" value="Eukaryota"/>
</dbReference>
<dbReference type="InParanoid" id="P28693"/>
<dbReference type="OrthoDB" id="4062651at2759"/>
<dbReference type="PhylomeDB" id="P28693"/>
<dbReference type="BRENDA" id="2.7.10.1">
    <property type="organism ID" value="1306"/>
</dbReference>
<dbReference type="EvolutionaryTrace" id="P28693"/>
<dbReference type="PRO" id="PR:P28693"/>
<dbReference type="Proteomes" id="UP000000539">
    <property type="component" value="Unassembled WGS sequence"/>
</dbReference>
<dbReference type="GO" id="GO:0030424">
    <property type="term" value="C:axon"/>
    <property type="evidence" value="ECO:0000250"/>
    <property type="project" value="UniProtKB"/>
</dbReference>
<dbReference type="GO" id="GO:0030425">
    <property type="term" value="C:dendrite"/>
    <property type="evidence" value="ECO:0000250"/>
    <property type="project" value="UniProtKB"/>
</dbReference>
<dbReference type="GO" id="GO:0005886">
    <property type="term" value="C:plasma membrane"/>
    <property type="evidence" value="ECO:0000250"/>
    <property type="project" value="UniProtKB"/>
</dbReference>
<dbReference type="GO" id="GO:0005524">
    <property type="term" value="F:ATP binding"/>
    <property type="evidence" value="ECO:0007669"/>
    <property type="project" value="UniProtKB-KW"/>
</dbReference>
<dbReference type="GO" id="GO:0004713">
    <property type="term" value="F:protein tyrosine kinase activity"/>
    <property type="evidence" value="ECO:0000304"/>
    <property type="project" value="Reactome"/>
</dbReference>
<dbReference type="GO" id="GO:0005005">
    <property type="term" value="F:transmembrane-ephrin receptor activity"/>
    <property type="evidence" value="ECO:0000250"/>
    <property type="project" value="UniProtKB"/>
</dbReference>
<dbReference type="GO" id="GO:0001525">
    <property type="term" value="P:angiogenesis"/>
    <property type="evidence" value="ECO:0000250"/>
    <property type="project" value="UniProtKB"/>
</dbReference>
<dbReference type="GO" id="GO:0007411">
    <property type="term" value="P:axon guidance"/>
    <property type="evidence" value="ECO:0000250"/>
    <property type="project" value="UniProtKB"/>
</dbReference>
<dbReference type="GO" id="GO:0007413">
    <property type="term" value="P:axonal fasciculation"/>
    <property type="evidence" value="ECO:0000250"/>
    <property type="project" value="UniProtKB"/>
</dbReference>
<dbReference type="GO" id="GO:0060996">
    <property type="term" value="P:dendritic spine development"/>
    <property type="evidence" value="ECO:0000250"/>
    <property type="project" value="UniProtKB"/>
</dbReference>
<dbReference type="GO" id="GO:0060997">
    <property type="term" value="P:dendritic spine morphogenesis"/>
    <property type="evidence" value="ECO:0000250"/>
    <property type="project" value="UniProtKB"/>
</dbReference>
<dbReference type="GO" id="GO:0048013">
    <property type="term" value="P:ephrin receptor signaling pathway"/>
    <property type="evidence" value="ECO:0000250"/>
    <property type="project" value="UniProtKB"/>
</dbReference>
<dbReference type="GO" id="GO:0018108">
    <property type="term" value="P:peptidyl-tyrosine phosphorylation"/>
    <property type="evidence" value="ECO:0000250"/>
    <property type="project" value="UniProtKB"/>
</dbReference>
<dbReference type="GO" id="GO:0051965">
    <property type="term" value="P:positive regulation of synapse assembly"/>
    <property type="evidence" value="ECO:0000250"/>
    <property type="project" value="UniProtKB"/>
</dbReference>
<dbReference type="GO" id="GO:0021963">
    <property type="term" value="P:spinothalamic tract morphogenesis"/>
    <property type="evidence" value="ECO:0000314"/>
    <property type="project" value="CACAO"/>
</dbReference>
<dbReference type="CDD" id="cd10477">
    <property type="entry name" value="EphR_LBD_B2"/>
    <property type="match status" value="1"/>
</dbReference>
<dbReference type="CDD" id="cd00063">
    <property type="entry name" value="FN3"/>
    <property type="match status" value="2"/>
</dbReference>
<dbReference type="CDD" id="cd05065">
    <property type="entry name" value="PTKc_EphR_B"/>
    <property type="match status" value="1"/>
</dbReference>
<dbReference type="CDD" id="cd09552">
    <property type="entry name" value="SAM_EPH-B2"/>
    <property type="match status" value="1"/>
</dbReference>
<dbReference type="CDD" id="cd00185">
    <property type="entry name" value="TNFRSF"/>
    <property type="match status" value="1"/>
</dbReference>
<dbReference type="FunFam" id="2.60.40.10:FF:000041">
    <property type="entry name" value="ephrin type-A receptor 3"/>
    <property type="match status" value="1"/>
</dbReference>
<dbReference type="FunFam" id="1.10.150.50:FF:000001">
    <property type="entry name" value="Ephrin type-A receptor 5"/>
    <property type="match status" value="1"/>
</dbReference>
<dbReference type="FunFam" id="2.10.50.10:FF:000001">
    <property type="entry name" value="Ephrin type-A receptor 5"/>
    <property type="match status" value="1"/>
</dbReference>
<dbReference type="FunFam" id="2.60.40.1770:FF:000001">
    <property type="entry name" value="Ephrin type-A receptor 5"/>
    <property type="match status" value="1"/>
</dbReference>
<dbReference type="FunFam" id="3.30.200.20:FF:000001">
    <property type="entry name" value="Ephrin type-A receptor 5"/>
    <property type="match status" value="1"/>
</dbReference>
<dbReference type="FunFam" id="1.10.510.10:FF:000015">
    <property type="entry name" value="Ephrin type-B receptor 2"/>
    <property type="match status" value="1"/>
</dbReference>
<dbReference type="FunFam" id="2.60.120.260:FF:000004">
    <property type="entry name" value="Ephrin type-B receptor 2"/>
    <property type="match status" value="1"/>
</dbReference>
<dbReference type="FunFam" id="2.60.40.10:FF:000110">
    <property type="entry name" value="Ephrin type-B receptor 2"/>
    <property type="match status" value="1"/>
</dbReference>
<dbReference type="Gene3D" id="2.60.40.1770">
    <property type="entry name" value="ephrin a2 ectodomain"/>
    <property type="match status" value="1"/>
</dbReference>
<dbReference type="Gene3D" id="2.60.120.260">
    <property type="entry name" value="Galactose-binding domain-like"/>
    <property type="match status" value="1"/>
</dbReference>
<dbReference type="Gene3D" id="2.60.40.10">
    <property type="entry name" value="Immunoglobulins"/>
    <property type="match status" value="2"/>
</dbReference>
<dbReference type="Gene3D" id="3.30.200.20">
    <property type="entry name" value="Phosphorylase Kinase, domain 1"/>
    <property type="match status" value="1"/>
</dbReference>
<dbReference type="Gene3D" id="1.10.150.50">
    <property type="entry name" value="Transcription Factor, Ets-1"/>
    <property type="match status" value="1"/>
</dbReference>
<dbReference type="Gene3D" id="1.10.510.10">
    <property type="entry name" value="Transferase(Phosphotransferase) domain 1"/>
    <property type="match status" value="1"/>
</dbReference>
<dbReference type="Gene3D" id="2.10.50.10">
    <property type="entry name" value="Tumor Necrosis Factor Receptor, subunit A, domain 2"/>
    <property type="match status" value="1"/>
</dbReference>
<dbReference type="InterPro" id="IPR027936">
    <property type="entry name" value="Eph_TM"/>
</dbReference>
<dbReference type="InterPro" id="IPR034238">
    <property type="entry name" value="EphB2_rcpt_lig-bd"/>
</dbReference>
<dbReference type="InterPro" id="IPR001090">
    <property type="entry name" value="Ephrin_rcpt_lig-bd_dom"/>
</dbReference>
<dbReference type="InterPro" id="IPR050449">
    <property type="entry name" value="Ephrin_rcpt_TKs"/>
</dbReference>
<dbReference type="InterPro" id="IPR003961">
    <property type="entry name" value="FN3_dom"/>
</dbReference>
<dbReference type="InterPro" id="IPR036116">
    <property type="entry name" value="FN3_sf"/>
</dbReference>
<dbReference type="InterPro" id="IPR008979">
    <property type="entry name" value="Galactose-bd-like_sf"/>
</dbReference>
<dbReference type="InterPro" id="IPR009030">
    <property type="entry name" value="Growth_fac_rcpt_cys_sf"/>
</dbReference>
<dbReference type="InterPro" id="IPR013783">
    <property type="entry name" value="Ig-like_fold"/>
</dbReference>
<dbReference type="InterPro" id="IPR011009">
    <property type="entry name" value="Kinase-like_dom_sf"/>
</dbReference>
<dbReference type="InterPro" id="IPR000719">
    <property type="entry name" value="Prot_kinase_dom"/>
</dbReference>
<dbReference type="InterPro" id="IPR017441">
    <property type="entry name" value="Protein_kinase_ATP_BS"/>
</dbReference>
<dbReference type="InterPro" id="IPR001660">
    <property type="entry name" value="SAM"/>
</dbReference>
<dbReference type="InterPro" id="IPR013761">
    <property type="entry name" value="SAM/pointed_sf"/>
</dbReference>
<dbReference type="InterPro" id="IPR001245">
    <property type="entry name" value="Ser-Thr/Tyr_kinase_cat_dom"/>
</dbReference>
<dbReference type="InterPro" id="IPR011641">
    <property type="entry name" value="Tyr-kin_ephrin_A/B_rcpt-like"/>
</dbReference>
<dbReference type="InterPro" id="IPR008266">
    <property type="entry name" value="Tyr_kinase_AS"/>
</dbReference>
<dbReference type="InterPro" id="IPR020635">
    <property type="entry name" value="Tyr_kinase_cat_dom"/>
</dbReference>
<dbReference type="InterPro" id="IPR016257">
    <property type="entry name" value="Tyr_kinase_ephrin_rcpt"/>
</dbReference>
<dbReference type="InterPro" id="IPR001426">
    <property type="entry name" value="Tyr_kinase_rcpt_V_CS"/>
</dbReference>
<dbReference type="PANTHER" id="PTHR46877">
    <property type="entry name" value="EPH RECEPTOR A5"/>
    <property type="match status" value="1"/>
</dbReference>
<dbReference type="PANTHER" id="PTHR46877:SF11">
    <property type="entry name" value="EPHRIN TYPE-B RECEPTOR 2"/>
    <property type="match status" value="1"/>
</dbReference>
<dbReference type="Pfam" id="PF14575">
    <property type="entry name" value="EphA2_TM"/>
    <property type="match status" value="1"/>
</dbReference>
<dbReference type="Pfam" id="PF01404">
    <property type="entry name" value="Ephrin_lbd"/>
    <property type="match status" value="1"/>
</dbReference>
<dbReference type="Pfam" id="PF07699">
    <property type="entry name" value="Ephrin_rec_like"/>
    <property type="match status" value="1"/>
</dbReference>
<dbReference type="Pfam" id="PF00041">
    <property type="entry name" value="fn3"/>
    <property type="match status" value="2"/>
</dbReference>
<dbReference type="Pfam" id="PF07714">
    <property type="entry name" value="PK_Tyr_Ser-Thr"/>
    <property type="match status" value="1"/>
</dbReference>
<dbReference type="Pfam" id="PF00536">
    <property type="entry name" value="SAM_1"/>
    <property type="match status" value="1"/>
</dbReference>
<dbReference type="PIRSF" id="PIRSF000666">
    <property type="entry name" value="TyrPK_ephrin_receptor"/>
    <property type="match status" value="1"/>
</dbReference>
<dbReference type="PRINTS" id="PR00014">
    <property type="entry name" value="FNTYPEIII"/>
</dbReference>
<dbReference type="PRINTS" id="PR00109">
    <property type="entry name" value="TYRKINASE"/>
</dbReference>
<dbReference type="SMART" id="SM00615">
    <property type="entry name" value="EPH_lbd"/>
    <property type="match status" value="1"/>
</dbReference>
<dbReference type="SMART" id="SM01411">
    <property type="entry name" value="Ephrin_rec_like"/>
    <property type="match status" value="1"/>
</dbReference>
<dbReference type="SMART" id="SM00060">
    <property type="entry name" value="FN3"/>
    <property type="match status" value="2"/>
</dbReference>
<dbReference type="SMART" id="SM00454">
    <property type="entry name" value="SAM"/>
    <property type="match status" value="1"/>
</dbReference>
<dbReference type="SMART" id="SM00219">
    <property type="entry name" value="TyrKc"/>
    <property type="match status" value="1"/>
</dbReference>
<dbReference type="SUPFAM" id="SSF49265">
    <property type="entry name" value="Fibronectin type III"/>
    <property type="match status" value="1"/>
</dbReference>
<dbReference type="SUPFAM" id="SSF49785">
    <property type="entry name" value="Galactose-binding domain-like"/>
    <property type="match status" value="1"/>
</dbReference>
<dbReference type="SUPFAM" id="SSF57184">
    <property type="entry name" value="Growth factor receptor domain"/>
    <property type="match status" value="1"/>
</dbReference>
<dbReference type="SUPFAM" id="SSF56112">
    <property type="entry name" value="Protein kinase-like (PK-like)"/>
    <property type="match status" value="1"/>
</dbReference>
<dbReference type="SUPFAM" id="SSF47769">
    <property type="entry name" value="SAM/Pointed domain"/>
    <property type="match status" value="1"/>
</dbReference>
<dbReference type="PROSITE" id="PS01186">
    <property type="entry name" value="EGF_2"/>
    <property type="match status" value="1"/>
</dbReference>
<dbReference type="PROSITE" id="PS51550">
    <property type="entry name" value="EPH_LBD"/>
    <property type="match status" value="1"/>
</dbReference>
<dbReference type="PROSITE" id="PS50853">
    <property type="entry name" value="FN3"/>
    <property type="match status" value="2"/>
</dbReference>
<dbReference type="PROSITE" id="PS00107">
    <property type="entry name" value="PROTEIN_KINASE_ATP"/>
    <property type="match status" value="1"/>
</dbReference>
<dbReference type="PROSITE" id="PS50011">
    <property type="entry name" value="PROTEIN_KINASE_DOM"/>
    <property type="match status" value="1"/>
</dbReference>
<dbReference type="PROSITE" id="PS00109">
    <property type="entry name" value="PROTEIN_KINASE_TYR"/>
    <property type="match status" value="1"/>
</dbReference>
<dbReference type="PROSITE" id="PS00790">
    <property type="entry name" value="RECEPTOR_TYR_KIN_V_1"/>
    <property type="match status" value="1"/>
</dbReference>
<dbReference type="PROSITE" id="PS00791">
    <property type="entry name" value="RECEPTOR_TYR_KIN_V_2"/>
    <property type="match status" value="1"/>
</dbReference>
<dbReference type="PROSITE" id="PS50105">
    <property type="entry name" value="SAM_DOMAIN"/>
    <property type="match status" value="1"/>
</dbReference>
<evidence type="ECO:0000250" key="1"/>
<evidence type="ECO:0000250" key="2">
    <source>
        <dbReference type="UniProtKB" id="P54763"/>
    </source>
</evidence>
<evidence type="ECO:0000255" key="3"/>
<evidence type="ECO:0000255" key="4">
    <source>
        <dbReference type="PROSITE-ProRule" id="PRU00159"/>
    </source>
</evidence>
<evidence type="ECO:0000255" key="5">
    <source>
        <dbReference type="PROSITE-ProRule" id="PRU00184"/>
    </source>
</evidence>
<evidence type="ECO:0000255" key="6">
    <source>
        <dbReference type="PROSITE-ProRule" id="PRU00316"/>
    </source>
</evidence>
<evidence type="ECO:0000255" key="7">
    <source>
        <dbReference type="PROSITE-ProRule" id="PRU00883"/>
    </source>
</evidence>
<evidence type="ECO:0000255" key="8">
    <source>
        <dbReference type="PROSITE-ProRule" id="PRU10028"/>
    </source>
</evidence>
<evidence type="ECO:0000303" key="9">
    <source>
    </source>
</evidence>
<evidence type="ECO:0000303" key="10">
    <source>
    </source>
</evidence>
<evidence type="ECO:0000305" key="11"/>
<evidence type="ECO:0007829" key="12">
    <source>
        <dbReference type="PDB" id="1SGG"/>
    </source>
</evidence>